<accession>L0T911</accession>
<organism>
    <name type="scientific">Mycobacterium tuberculosis (strain ATCC 25618 / H37Rv)</name>
    <dbReference type="NCBI Taxonomy" id="83332"/>
    <lineage>
        <taxon>Bacteria</taxon>
        <taxon>Bacillati</taxon>
        <taxon>Actinomycetota</taxon>
        <taxon>Actinomycetes</taxon>
        <taxon>Mycobacteriales</taxon>
        <taxon>Mycobacteriaceae</taxon>
        <taxon>Mycobacterium</taxon>
        <taxon>Mycobacterium tuberculosis complex</taxon>
    </lineage>
</organism>
<sequence>MSRAAPRRASQSQSTRPARGLRRPPGAQEVGQRKRPGKTQKARQAQEATKSRPATRSDVAPAGRSTRARRTRQVVDVGTRGASFVFRHRTGNAVILVLMLVAATQLFFLQVSHAAGLRAQAAGQLKVTDVQPAARGSIVDRNNDRLAFTIEARALTFQPKRIRRQLEEARKKTSAAPDPQQRLRDIAQEVAGKLNNKPDAAAVLKKLQSDETFVYLARAVDPAVASAICAKYPEVGAERQDLRQYPGGSLAANVVGGIDWDGHGLLGLEDSLDAVLAGTDGSVTYDRGSDGVVIPGSYRNRHKAVHGSTVVLTLDNDIQFYVQQQVQQAKNLSGAHNVSAVVLDAKTGEVLAMANDNTFDPSQDIGRQGDKQLGNPAVSSPFEPGSVNKIVAASAVIEHGLSSPDEVLQVPGSIQMGGVTVHDAWEHGVMPYTTTGVFGKSSNVGTLMLSQRVGPERYYDMLRKFGLGQRTGVGLPGESAGLVPPIDQWSGSTFANLPIGQGLSMTLLQMTGMYQAIANDGVRVPPRIIKATVAPDGSRTEEPRPDDIRVVSAQTAQTVRQMLRAVVQRDPMGYQQGTGPTAGVPGYQMAGKTGTAQQINPGCGCYFDDVYWITFAGIATADNPRYVIGIMLDNPARNSDGAPGHSAAPLFHNIAGWLMQRENVPLSPDPGPPLVLQAT</sequence>
<feature type="chain" id="PRO_0000422679" description="Penicillin-binding protein PbpB">
    <location>
        <begin position="1"/>
        <end position="679"/>
    </location>
</feature>
<feature type="topological domain" description="Cytoplasmic" evidence="7">
    <location>
        <begin position="1"/>
        <end position="90"/>
    </location>
</feature>
<feature type="transmembrane region" description="Helical" evidence="3">
    <location>
        <begin position="91"/>
        <end position="111"/>
    </location>
</feature>
<feature type="topological domain" description="Extracellular" evidence="7">
    <location>
        <begin position="112"/>
        <end position="679"/>
    </location>
</feature>
<feature type="region of interest" description="Disordered" evidence="4">
    <location>
        <begin position="1"/>
        <end position="74"/>
    </location>
</feature>
<feature type="compositionally biased region" description="Polar residues" evidence="4">
    <location>
        <begin position="42"/>
        <end position="54"/>
    </location>
</feature>
<feature type="active site" description="Acyl-ester intermediate" evidence="2">
    <location>
        <position position="386"/>
    </location>
</feature>
<feature type="mutagenesis site" description="No degradation by Rip1.">
    <original>AA</original>
    <variation>LL</variation>
    <location>
        <begin position="102"/>
        <end position="103"/>
    </location>
</feature>
<feature type="mutagenesis site" description="No effect on degradation by Rip1." evidence="5">
    <original>A</original>
    <variation>L</variation>
    <location>
        <position position="102"/>
    </location>
</feature>
<feature type="mutagenesis site" description="No effect on degradation by Rip1." evidence="5">
    <original>A</original>
    <variation>L</variation>
    <location>
        <position position="103"/>
    </location>
</feature>
<feature type="mutagenesis site" description="Decreased interaction with Wag31. Loss of interaction, reduced protection from Rip1 proteolysis; when associated with 488-Q--S-490 deletion." evidence="5">
    <location>
        <begin position="427"/>
        <end position="429"/>
    </location>
</feature>
<feature type="mutagenesis site" description="Decreased interaction with Wag31. Loss of interaction, reduced protection from Rip1 proteolysis; when associated with 427-H--V-429 deletion." evidence="5">
    <location>
        <begin position="488"/>
        <end position="490"/>
    </location>
</feature>
<feature type="strand" evidence="8">
    <location>
        <begin position="145"/>
        <end position="153"/>
    </location>
</feature>
<feature type="strand" evidence="8">
    <location>
        <begin position="239"/>
        <end position="244"/>
    </location>
</feature>
<feature type="turn" evidence="8">
    <location>
        <begin position="246"/>
        <end position="251"/>
    </location>
</feature>
<feature type="helix" evidence="8">
    <location>
        <begin position="252"/>
        <end position="255"/>
    </location>
</feature>
<feature type="strand" evidence="8">
    <location>
        <begin position="262"/>
        <end position="266"/>
    </location>
</feature>
<feature type="helix" evidence="8">
    <location>
        <begin position="268"/>
        <end position="271"/>
    </location>
</feature>
<feature type="helix" evidence="8">
    <location>
        <begin position="273"/>
        <end position="277"/>
    </location>
</feature>
<feature type="strand" evidence="8">
    <location>
        <begin position="309"/>
        <end position="313"/>
    </location>
</feature>
<feature type="helix" evidence="8">
    <location>
        <begin position="316"/>
        <end position="333"/>
    </location>
</feature>
<feature type="strand" evidence="8">
    <location>
        <begin position="336"/>
        <end position="344"/>
    </location>
</feature>
<feature type="turn" evidence="8">
    <location>
        <begin position="345"/>
        <end position="347"/>
    </location>
</feature>
<feature type="strand" evidence="8">
    <location>
        <begin position="349"/>
        <end position="358"/>
    </location>
</feature>
<feature type="helix" evidence="8">
    <location>
        <begin position="365"/>
        <end position="367"/>
    </location>
</feature>
<feature type="helix" evidence="8">
    <location>
        <begin position="376"/>
        <end position="379"/>
    </location>
</feature>
<feature type="helix" evidence="8">
    <location>
        <begin position="385"/>
        <end position="388"/>
    </location>
</feature>
<feature type="helix" evidence="8">
    <location>
        <begin position="389"/>
        <end position="398"/>
    </location>
</feature>
<feature type="strand" evidence="8">
    <location>
        <begin position="412"/>
        <end position="416"/>
    </location>
</feature>
<feature type="strand" evidence="8">
    <location>
        <begin position="419"/>
        <end position="422"/>
    </location>
</feature>
<feature type="strand" evidence="8">
    <location>
        <begin position="428"/>
        <end position="430"/>
    </location>
</feature>
<feature type="helix" evidence="8">
    <location>
        <begin position="434"/>
        <end position="440"/>
    </location>
</feature>
<feature type="helix" evidence="8">
    <location>
        <begin position="443"/>
        <end position="453"/>
    </location>
</feature>
<feature type="helix" evidence="8">
    <location>
        <begin position="455"/>
        <end position="464"/>
    </location>
</feature>
<feature type="turn" evidence="8">
    <location>
        <begin position="465"/>
        <end position="468"/>
    </location>
</feature>
<feature type="helix" evidence="8">
    <location>
        <begin position="486"/>
        <end position="488"/>
    </location>
</feature>
<feature type="helix" evidence="8">
    <location>
        <begin position="493"/>
        <end position="495"/>
    </location>
</feature>
<feature type="helix" evidence="8">
    <location>
        <begin position="497"/>
        <end position="499"/>
    </location>
</feature>
<feature type="helix" evidence="8">
    <location>
        <begin position="507"/>
        <end position="518"/>
    </location>
</feature>
<feature type="turn" evidence="8">
    <location>
        <begin position="519"/>
        <end position="521"/>
    </location>
</feature>
<feature type="strand" evidence="8">
    <location>
        <begin position="529"/>
        <end position="533"/>
    </location>
</feature>
<feature type="strand" evidence="8">
    <location>
        <begin position="539"/>
        <end position="541"/>
    </location>
</feature>
<feature type="helix" evidence="8">
    <location>
        <begin position="553"/>
        <end position="562"/>
    </location>
</feature>
<feature type="helix" evidence="8">
    <location>
        <begin position="563"/>
        <end position="567"/>
    </location>
</feature>
<feature type="helix" evidence="8">
    <location>
        <begin position="580"/>
        <end position="582"/>
    </location>
</feature>
<feature type="strand" evidence="8">
    <location>
        <begin position="590"/>
        <end position="599"/>
    </location>
</feature>
<feature type="turn" evidence="8">
    <location>
        <begin position="601"/>
        <end position="603"/>
    </location>
</feature>
<feature type="strand" evidence="8">
    <location>
        <begin position="604"/>
        <end position="619"/>
    </location>
</feature>
<feature type="strand" evidence="8">
    <location>
        <begin position="621"/>
        <end position="623"/>
    </location>
</feature>
<feature type="strand" evidence="8">
    <location>
        <begin position="626"/>
        <end position="634"/>
    </location>
</feature>
<feature type="strand" evidence="8">
    <location>
        <begin position="641"/>
        <end position="644"/>
    </location>
</feature>
<feature type="helix" evidence="8">
    <location>
        <begin position="648"/>
        <end position="661"/>
    </location>
</feature>
<name>PBPB_MYCTU</name>
<comment type="function">
    <text evidence="1 5">Synthesis of cross-linked peptidoglycan from the lipid intermediates.</text>
</comment>
<comment type="pathway">
    <text>Cell wall biogenesis; peptidoglycan biosynthesis.</text>
</comment>
<comment type="subunit">
    <text evidence="5">Interacts with Wag31.</text>
</comment>
<comment type="subcellular location">
    <subcellularLocation>
        <location evidence="6">Cell membrane</location>
        <topology evidence="6">Single-pass membrane protein</topology>
    </subcellularLocation>
</comment>
<comment type="domain">
    <text evidence="1">The enzyme has an N-terminal penicillin insensitive transglycosylase domain (formation of linear glycan strands) and a C-terminal penicillin-sensitive transpeptidase domain (cross-linking of the peptide subunits).</text>
</comment>
<comment type="PTM">
    <text>Cleaved by Rip1 in response to oxidative stress (H(2)O(2)), prevented by Wag31. Cleavage probably occurs near residues 102-103.</text>
</comment>
<comment type="similarity">
    <text evidence="6">Belongs to the transpeptidase family.</text>
</comment>
<protein>
    <recommendedName>
        <fullName>Penicillin-binding protein PbpB</fullName>
    </recommendedName>
    <alternativeName>
        <fullName>Penicillin-binding protein 3</fullName>
        <shortName>PBP3</shortName>
    </alternativeName>
</protein>
<proteinExistence type="evidence at protein level"/>
<reference key="1">
    <citation type="journal article" date="1998" name="Nature">
        <title>Deciphering the biology of Mycobacterium tuberculosis from the complete genome sequence.</title>
        <authorList>
            <person name="Cole S.T."/>
            <person name="Brosch R."/>
            <person name="Parkhill J."/>
            <person name="Garnier T."/>
            <person name="Churcher C.M."/>
            <person name="Harris D.E."/>
            <person name="Gordon S.V."/>
            <person name="Eiglmeier K."/>
            <person name="Gas S."/>
            <person name="Barry C.E. III"/>
            <person name="Tekaia F."/>
            <person name="Badcock K."/>
            <person name="Basham D."/>
            <person name="Brown D."/>
            <person name="Chillingworth T."/>
            <person name="Connor R."/>
            <person name="Davies R.M."/>
            <person name="Devlin K."/>
            <person name="Feltwell T."/>
            <person name="Gentles S."/>
            <person name="Hamlin N."/>
            <person name="Holroyd S."/>
            <person name="Hornsby T."/>
            <person name="Jagels K."/>
            <person name="Krogh A."/>
            <person name="McLean J."/>
            <person name="Moule S."/>
            <person name="Murphy L.D."/>
            <person name="Oliver S."/>
            <person name="Osborne J."/>
            <person name="Quail M.A."/>
            <person name="Rajandream M.A."/>
            <person name="Rogers J."/>
            <person name="Rutter S."/>
            <person name="Seeger K."/>
            <person name="Skelton S."/>
            <person name="Squares S."/>
            <person name="Squares R."/>
            <person name="Sulston J.E."/>
            <person name="Taylor K."/>
            <person name="Whitehead S."/>
            <person name="Barrell B.G."/>
        </authorList>
    </citation>
    <scope>NUCLEOTIDE SEQUENCE [LARGE SCALE GENOMIC DNA]</scope>
    <source>
        <strain>ATCC 25618 / H37Rv</strain>
    </source>
</reference>
<reference key="2">
    <citation type="journal article" date="2009" name="Mol. Microbiol.">
        <title>Novel role of Wag31 in protection of mycobacteria under oxidative stress.</title>
        <authorList>
            <person name="Mukherjee P."/>
            <person name="Sureka K."/>
            <person name="Datta P."/>
            <person name="Hossain T."/>
            <person name="Barik S."/>
            <person name="Das K.P."/>
            <person name="Kundu M."/>
            <person name="Basu J."/>
        </authorList>
    </citation>
    <scope>IDENTIFICATION BY MASS SPECTROMETRY</scope>
    <scope>FUNCTION</scope>
    <scope>TOPOLOGY</scope>
    <scope>INTERACTION WITH WAG31</scope>
    <scope>CLEAVAGE BY RIP1</scope>
    <scope>MUTAGENESIS OF ALA-102; ALA-103; 427-HIS--VAL-429 AND 488-GLN--SER-490</scope>
    <source>
        <strain>ATCC 25618 / H37Rv</strain>
    </source>
</reference>
<evidence type="ECO:0000250" key="1"/>
<evidence type="ECO:0000250" key="2">
    <source>
        <dbReference type="UniProtKB" id="P0AD65"/>
    </source>
</evidence>
<evidence type="ECO:0000255" key="3"/>
<evidence type="ECO:0000256" key="4">
    <source>
        <dbReference type="SAM" id="MobiDB-lite"/>
    </source>
</evidence>
<evidence type="ECO:0000269" key="5">
    <source>
    </source>
</evidence>
<evidence type="ECO:0000305" key="6"/>
<evidence type="ECO:0000305" key="7">
    <source>
    </source>
</evidence>
<evidence type="ECO:0007829" key="8">
    <source>
        <dbReference type="PDB" id="6KGU"/>
    </source>
</evidence>
<dbReference type="EMBL" id="AL123456">
    <property type="protein sequence ID" value="CCP44940.1"/>
    <property type="molecule type" value="Genomic_DNA"/>
</dbReference>
<dbReference type="RefSeq" id="NP_216679.1">
    <property type="nucleotide sequence ID" value="NC_000962.3"/>
</dbReference>
<dbReference type="RefSeq" id="WP_003411214.1">
    <property type="nucleotide sequence ID" value="NZ_NVQJ01000088.1"/>
</dbReference>
<dbReference type="PDB" id="6KGH">
    <property type="method" value="X-ray"/>
    <property type="resolution" value="2.11 A"/>
    <property type="chains" value="A=123-679"/>
</dbReference>
<dbReference type="PDB" id="6KGS">
    <property type="method" value="X-ray"/>
    <property type="resolution" value="2.31 A"/>
    <property type="chains" value="A=123-679"/>
</dbReference>
<dbReference type="PDB" id="6KGT">
    <property type="method" value="X-ray"/>
    <property type="resolution" value="2.31 A"/>
    <property type="chains" value="A=123-679"/>
</dbReference>
<dbReference type="PDB" id="6KGU">
    <property type="method" value="X-ray"/>
    <property type="resolution" value="2.11 A"/>
    <property type="chains" value="A=123-679"/>
</dbReference>
<dbReference type="PDB" id="6KGV">
    <property type="method" value="X-ray"/>
    <property type="resolution" value="2.30 A"/>
    <property type="chains" value="A=123-679"/>
</dbReference>
<dbReference type="PDB" id="6KGW">
    <property type="method" value="X-ray"/>
    <property type="resolution" value="2.41 A"/>
    <property type="chains" value="A=123-679"/>
</dbReference>
<dbReference type="PDBsum" id="6KGH"/>
<dbReference type="PDBsum" id="6KGS"/>
<dbReference type="PDBsum" id="6KGT"/>
<dbReference type="PDBsum" id="6KGU"/>
<dbReference type="PDBsum" id="6KGV"/>
<dbReference type="PDBsum" id="6KGW"/>
<dbReference type="SMR" id="L0T911"/>
<dbReference type="FunCoup" id="L0T911">
    <property type="interactions" value="31"/>
</dbReference>
<dbReference type="IntAct" id="L0T911">
    <property type="interactions" value="1"/>
</dbReference>
<dbReference type="STRING" id="83332.Rv2163c"/>
<dbReference type="PaxDb" id="83332-Rv2163c"/>
<dbReference type="DNASU" id="887949"/>
<dbReference type="GeneID" id="887949"/>
<dbReference type="KEGG" id="mtu:Rv2163c"/>
<dbReference type="KEGG" id="mtv:RVBD_2163c"/>
<dbReference type="TubercuList" id="Rv2163c"/>
<dbReference type="eggNOG" id="COG0768">
    <property type="taxonomic scope" value="Bacteria"/>
</dbReference>
<dbReference type="InParanoid" id="L0T911"/>
<dbReference type="OrthoDB" id="9789078at2"/>
<dbReference type="PhylomeDB" id="L0T911"/>
<dbReference type="UniPathway" id="UPA00219"/>
<dbReference type="Proteomes" id="UP000001584">
    <property type="component" value="Chromosome"/>
</dbReference>
<dbReference type="GO" id="GO:0005886">
    <property type="term" value="C:plasma membrane"/>
    <property type="evidence" value="ECO:0000318"/>
    <property type="project" value="GO_Central"/>
</dbReference>
<dbReference type="GO" id="GO:0008658">
    <property type="term" value="F:penicillin binding"/>
    <property type="evidence" value="ECO:0000318"/>
    <property type="project" value="GO_Central"/>
</dbReference>
<dbReference type="GO" id="GO:0071555">
    <property type="term" value="P:cell wall organization"/>
    <property type="evidence" value="ECO:0000318"/>
    <property type="project" value="GO_Central"/>
</dbReference>
<dbReference type="GO" id="GO:0009252">
    <property type="term" value="P:peptidoglycan biosynthetic process"/>
    <property type="evidence" value="ECO:0007669"/>
    <property type="project" value="UniProtKB-UniPathway"/>
</dbReference>
<dbReference type="GO" id="GO:0008360">
    <property type="term" value="P:regulation of cell shape"/>
    <property type="evidence" value="ECO:0007669"/>
    <property type="project" value="UniProtKB-KW"/>
</dbReference>
<dbReference type="FunFam" id="3.30.450.330:FF:000003">
    <property type="entry name" value="Cell division protein FtsI"/>
    <property type="match status" value="1"/>
</dbReference>
<dbReference type="FunFam" id="3.40.710.10:FF:000066">
    <property type="entry name" value="Penicillin-binding membrane protein PbpB"/>
    <property type="match status" value="1"/>
</dbReference>
<dbReference type="Gene3D" id="3.30.450.330">
    <property type="match status" value="1"/>
</dbReference>
<dbReference type="Gene3D" id="3.40.710.10">
    <property type="entry name" value="DD-peptidase/beta-lactamase superfamily"/>
    <property type="match status" value="1"/>
</dbReference>
<dbReference type="Gene3D" id="3.90.1310.10">
    <property type="entry name" value="Penicillin-binding protein 2a (Domain 2)"/>
    <property type="match status" value="1"/>
</dbReference>
<dbReference type="InterPro" id="IPR050515">
    <property type="entry name" value="Bact_Transpept/Beta-Lactamase"/>
</dbReference>
<dbReference type="InterPro" id="IPR012338">
    <property type="entry name" value="Beta-lactam/transpept-like"/>
</dbReference>
<dbReference type="InterPro" id="IPR005311">
    <property type="entry name" value="PBP_dimer"/>
</dbReference>
<dbReference type="InterPro" id="IPR036138">
    <property type="entry name" value="PBP_dimer_sf"/>
</dbReference>
<dbReference type="InterPro" id="IPR001460">
    <property type="entry name" value="PCN-bd_Tpept"/>
</dbReference>
<dbReference type="PANTHER" id="PTHR30627">
    <property type="entry name" value="PEPTIDOGLYCAN D,D-TRANSPEPTIDASE"/>
    <property type="match status" value="1"/>
</dbReference>
<dbReference type="PANTHER" id="PTHR30627:SF1">
    <property type="entry name" value="PEPTIDOGLYCAN D,D-TRANSPEPTIDASE FTSI"/>
    <property type="match status" value="1"/>
</dbReference>
<dbReference type="Pfam" id="PF03717">
    <property type="entry name" value="PBP_dimer"/>
    <property type="match status" value="1"/>
</dbReference>
<dbReference type="Pfam" id="PF00905">
    <property type="entry name" value="Transpeptidase"/>
    <property type="match status" value="1"/>
</dbReference>
<dbReference type="SUPFAM" id="SSF56601">
    <property type="entry name" value="beta-lactamase/transpeptidase-like"/>
    <property type="match status" value="1"/>
</dbReference>
<dbReference type="SUPFAM" id="SSF56519">
    <property type="entry name" value="Penicillin binding protein dimerisation domain"/>
    <property type="match status" value="1"/>
</dbReference>
<keyword id="KW-0002">3D-structure</keyword>
<keyword id="KW-1003">Cell membrane</keyword>
<keyword id="KW-0133">Cell shape</keyword>
<keyword id="KW-0961">Cell wall biogenesis/degradation</keyword>
<keyword id="KW-0472">Membrane</keyword>
<keyword id="KW-0573">Peptidoglycan synthesis</keyword>
<keyword id="KW-1185">Reference proteome</keyword>
<keyword id="KW-0812">Transmembrane</keyword>
<keyword id="KW-1133">Transmembrane helix</keyword>
<gene>
    <name type="primary">pbpB</name>
    <name type="synonym">ftsI</name>
    <name type="synonym">pbp3</name>
    <name type="ordered locus">Rv2163c</name>
</gene>